<comment type="function">
    <text evidence="3">The large envelope protein exists in two topological conformations, one which is termed 'external' or Le-HBsAg and the other 'internal' or Li-HBsAg. In its external conformation the protein attaches the virus to cell receptors and thereby initiating infection. This interaction determines the species specificity and liver tropism. This attachment induces virion internalization predominantly through caveolin-mediated endocytosis. The large envelope protein also assures fusion between virion membrane and endosomal membrane. In its internal conformation the protein plays a role in virion morphogenesis and mediates the contact with the nucleocapsid like a matrix protein.</text>
</comment>
<comment type="function">
    <text evidence="3">The middle envelope protein plays an important role in the budding of the virion. It is involved in the induction of budding in a nucleocapsid independent way. In this process the majority of envelope proteins bud to form subviral lipoprotein particles of 22 nm of diameter that do not contain a nucleocapsid.</text>
</comment>
<comment type="subunit">
    <molecule>Isoform L</molecule>
    <text evidence="2">In its internal form (Li-HBsAg), interacts with the capsid protein and with the isoform S. Interacts with host chaperone CANX.</text>
</comment>
<comment type="subunit">
    <molecule>Isoform M</molecule>
    <text evidence="2">Associates with host chaperone CANX through its pre-S2 N glycan; this association may be essential for isoform M proper secretion.</text>
</comment>
<comment type="subunit">
    <molecule>Isoform S</molecule>
    <text evidence="2">Interacts with isoform L. Interacts with the antigens of satellite virus HDV (HDVAgs); this interaction is required for encapsidation of HDV genomic RNA.</text>
</comment>
<comment type="subcellular location">
    <subcellularLocation>
        <location evidence="3">Virion membrane</location>
    </subcellularLocation>
</comment>
<comment type="alternative products">
    <event type="alternative splicing"/>
    <event type="alternative initiation"/>
    <isoform>
        <id>P17101-1</id>
        <name>L</name>
        <name>Large envelope protein</name>
        <name>LHB</name>
        <name>L-HBsAg</name>
        <sequence type="displayed"/>
    </isoform>
    <isoform>
        <id>P17101-2</id>
        <name>M</name>
        <name>Middle envelope protein</name>
        <name>MHB</name>
        <name>M-HBsAg</name>
        <sequence type="described" ref="VSP_031357"/>
    </isoform>
    <isoform>
        <id>P17101-3</id>
        <name>S</name>
        <name>Small envelope protein</name>
        <name>SHB</name>
        <name>S-HBsAg</name>
        <sequence type="described" ref="VSP_031356"/>
    </isoform>
</comment>
<comment type="domain">
    <text evidence="3">The large envelope protein is synthesized with the pre-S region at the cytosolic side of the endoplasmic reticulum and, hence will be within the virion after budding. Therefore the pre-S region is not N-glycosylated. Later a post-translational translocation of N-terminal pre-S and TM1 domains occur in about 50% of proteins at the virion surface. These molecules change their topology by an unknown mechanism, resulting in exposure of pre-S region at virion surface. For isoform M in contrast, the pre-S2 region is translocated cotranslationally to the endoplasmic reticulum lumen and is N-glycosylated.</text>
</comment>
<comment type="PTM">
    <text evidence="1 3">Isoform M is N-terminally acetylated by host at a ratio of 90%, and N-glycosylated by host at the pre-S2 region.</text>
</comment>
<comment type="PTM">
    <text evidence="3">Myristoylated.</text>
</comment>
<comment type="biotechnology">
    <text>Systematic vaccination of individuals at risk of exposure to the virus has been the main method of controlling the morbidity and mortality associated with hepatitis B. The first hepatitis B vaccine was manufactured by the purification and inactivation of HBsAg obtained from the plasma of chronic hepatitis B virus carriers. The vaccine is now produced by recombinant DNA techniques and expression of the S isoform in yeast cells. The pre-S region do not seem to induce strong enough antigenic response.</text>
</comment>
<comment type="similarity">
    <text evidence="3">Belongs to the orthohepadnavirus major surface antigen family.</text>
</comment>
<organismHost>
    <name type="scientific">Homo sapiens</name>
    <name type="common">Human</name>
    <dbReference type="NCBI Taxonomy" id="9606"/>
</organismHost>
<organismHost>
    <name type="scientific">Pan troglodytes</name>
    <name type="common">Chimpanzee</name>
    <dbReference type="NCBI Taxonomy" id="9598"/>
</organismHost>
<sequence>MGGWSSKPRKGMGTNLSVPNPLGFFPDHQLDPVFGANSNNPDWDFNPIKDHWPAANQVGVGAFGPGFTPPHGGVLGWSPQAQGMLTPVSTIPPPASANRQSGRQPTPISPPLRDSHPQAMQWNSTAFHQALQDPRVRGLYFPAGGSSSGTVNPAPNIASHISSISARTGDPVTNMENITSGFLGPLPVLQAGFFLLTRILTIPQSLDSWWTSLNFLGGSPVCLGQNSRSPTSNHSPTSCPPICPGYRWMCLRRFIIFLFILLLCLIFLLVLLDYQGMLPVCPLILGSTTTSTGPCKTCTTPAQGNSMFPSCCCTKPTDGNCTCIPIPSSWAFAKYLWEWASVRFSWLSLLVPFVQWFVGLSPTVWLSAIWMMWYWGPSLYSIVSSFIPLLPIFFCLWVYI</sequence>
<proteinExistence type="evidence at protein level"/>
<organism>
    <name type="scientific">Hepatitis B virus genotype A2 subtype adw2 (isolate Germany/991/1990)</name>
    <name type="common">HBV-A</name>
    <dbReference type="NCBI Taxonomy" id="10410"/>
    <lineage>
        <taxon>Viruses</taxon>
        <taxon>Riboviria</taxon>
        <taxon>Pararnavirae</taxon>
        <taxon>Artverviricota</taxon>
        <taxon>Revtraviricetes</taxon>
        <taxon>Blubervirales</taxon>
        <taxon>Hepadnaviridae</taxon>
        <taxon>Orthohepadnavirus</taxon>
        <taxon>Hepatitis B virus</taxon>
    </lineage>
</organism>
<gene>
    <name evidence="3" type="primary">S</name>
</gene>
<name>HBSAG_HBVA4</name>
<keyword id="KW-0007">Acetylation</keyword>
<keyword id="KW-0024">Alternative initiation</keyword>
<keyword id="KW-0025">Alternative splicing</keyword>
<keyword id="KW-1166">Caveolin-mediated endocytosis of virus by host</keyword>
<keyword id="KW-1170">Fusion of virus membrane with host endosomal membrane</keyword>
<keyword id="KW-1168">Fusion of virus membrane with host membrane</keyword>
<keyword id="KW-0325">Glycoprotein</keyword>
<keyword id="KW-0945">Host-virus interaction</keyword>
<keyword id="KW-0449">Lipoprotein</keyword>
<keyword id="KW-0472">Membrane</keyword>
<keyword id="KW-0519">Myristate</keyword>
<keyword id="KW-0812">Transmembrane</keyword>
<keyword id="KW-1133">Transmembrane helix</keyword>
<keyword id="KW-1161">Viral attachment to host cell</keyword>
<keyword id="KW-0261">Viral envelope protein</keyword>
<keyword id="KW-1162">Viral penetration into host cytoplasm</keyword>
<keyword id="KW-0946">Virion</keyword>
<keyword id="KW-1164">Virus endocytosis by host</keyword>
<keyword id="KW-1160">Virus entry into host cell</keyword>
<feature type="initiator methionine" description="Removed; by host" evidence="3">
    <location>
        <position position="1"/>
    </location>
</feature>
<feature type="chain" id="PRO_0000038111" description="Large envelope protein" evidence="3">
    <location>
        <begin position="2"/>
        <end position="400"/>
    </location>
</feature>
<feature type="topological domain" description="Intravirion; in internal conformation" evidence="3">
    <location>
        <begin position="2"/>
        <end position="253"/>
    </location>
</feature>
<feature type="topological domain" description="Virion surface; in external conformation" evidence="3">
    <location>
        <begin position="2"/>
        <end position="181"/>
    </location>
</feature>
<feature type="transmembrane region" description="Helical; Name=TM1; Note=In external conformation" evidence="3">
    <location>
        <begin position="182"/>
        <end position="202"/>
    </location>
</feature>
<feature type="topological domain" description="Intravirion; in external conformation" evidence="3">
    <location>
        <begin position="203"/>
        <end position="253"/>
    </location>
</feature>
<feature type="transmembrane region" description="Helical; Name=TM2" evidence="3">
    <location>
        <begin position="254"/>
        <end position="274"/>
    </location>
</feature>
<feature type="topological domain" description="Virion surface" evidence="3">
    <location>
        <begin position="275"/>
        <end position="348"/>
    </location>
</feature>
<feature type="transmembrane region" description="Helical" evidence="3">
    <location>
        <begin position="349"/>
        <end position="369"/>
    </location>
</feature>
<feature type="topological domain" description="Intravirion" evidence="3">
    <location>
        <begin position="370"/>
        <end position="375"/>
    </location>
</feature>
<feature type="transmembrane region" description="Helical; Name=TM3" evidence="3">
    <location>
        <begin position="376"/>
        <end position="398"/>
    </location>
</feature>
<feature type="topological domain" description="Virion surface" evidence="3">
    <location>
        <begin position="399"/>
        <end position="400"/>
    </location>
</feature>
<feature type="region of interest" description="Disordered" evidence="4">
    <location>
        <begin position="1"/>
        <end position="20"/>
    </location>
</feature>
<feature type="region of interest" description="Pre-S" evidence="3">
    <location>
        <begin position="2"/>
        <end position="174"/>
    </location>
</feature>
<feature type="region of interest" description="Pre-S1" evidence="3">
    <location>
        <begin position="2"/>
        <end position="119"/>
    </location>
</feature>
<feature type="region of interest" description="Disordered" evidence="4">
    <location>
        <begin position="85"/>
        <end position="114"/>
    </location>
</feature>
<feature type="region of interest" description="Pre-S2" evidence="3">
    <location>
        <begin position="120"/>
        <end position="174"/>
    </location>
</feature>
<feature type="compositionally biased region" description="Polar residues" evidence="4">
    <location>
        <begin position="97"/>
        <end position="106"/>
    </location>
</feature>
<feature type="lipid moiety-binding region" description="N-myristoyl glycine; by host" evidence="3">
    <location>
        <position position="2"/>
    </location>
</feature>
<feature type="glycosylation site" description="N-linked (GlcNAc...) asparagine; by host" evidence="3">
    <location>
        <position position="320"/>
    </location>
</feature>
<feature type="splice variant" id="VSP_031356" description="In isoform S." evidence="5">
    <location>
        <begin position="1"/>
        <end position="174"/>
    </location>
</feature>
<feature type="splice variant" id="VSP_031357" description="In isoform M." evidence="5">
    <location>
        <begin position="1"/>
        <end position="119"/>
    </location>
</feature>
<feature type="modified residue" description="N-acetylmethionine" evidence="5">
    <location sequence="P17101-2">
        <position position="1"/>
    </location>
</feature>
<feature type="glycosylation site" description="N-linked (GlcNAc...) asparagine" evidence="5">
    <location sequence="P17101-2">
        <position position="4"/>
    </location>
</feature>
<protein>
    <recommendedName>
        <fullName evidence="3">Large envelope protein</fullName>
    </recommendedName>
    <alternativeName>
        <fullName evidence="3">L glycoprotein</fullName>
    </alternativeName>
    <alternativeName>
        <fullName evidence="3">L-HBsAg</fullName>
        <shortName evidence="3">LHB</shortName>
    </alternativeName>
    <alternativeName>
        <fullName evidence="3">Large S protein</fullName>
    </alternativeName>
    <alternativeName>
        <fullName evidence="3">Large surface protein</fullName>
    </alternativeName>
    <alternativeName>
        <fullName evidence="3">Major surface antigen</fullName>
    </alternativeName>
</protein>
<reference key="1">
    <citation type="submission" date="1990-02" db="EMBL/GenBank/DDBJ databases">
        <authorList>
            <person name="Koechel H.G."/>
            <person name="Schueler A."/>
            <person name="Lottmann S."/>
            <person name="Thomssen R."/>
        </authorList>
    </citation>
    <scope>NUCLEOTIDE SEQUENCE [GENOMIC DNA]</scope>
</reference>
<reference key="2">
    <citation type="journal article" date="1996" name="Intervirology">
        <title>Functions of the large hepatitis B virus surface protein in viral particle morphogenesis.</title>
        <authorList>
            <person name="Bruss V."/>
            <person name="Gerhardt E."/>
            <person name="Vieluf K."/>
            <person name="Wunderlich G."/>
        </authorList>
    </citation>
    <scope>REVIEW</scope>
</reference>
<reference key="3">
    <citation type="journal article" date="1998" name="Adv. Exp. Med. Biol.">
        <title>Role of glycan processing in hepatitis B virus envelope protein trafficking.</title>
        <authorList>
            <person name="Block T.M."/>
            <person name="Lu X."/>
            <person name="Mehta A."/>
            <person name="Park J."/>
            <person name="Blumberg B.S."/>
            <person name="Dwek R."/>
        </authorList>
    </citation>
    <scope>REVIEW</scope>
</reference>
<reference key="4">
    <citation type="journal article" date="2004" name="Virus Res.">
        <title>Envelopment of the hepatitis B virus nucleocapsid.</title>
        <authorList>
            <person name="Bruss V."/>
        </authorList>
    </citation>
    <scope>REVIEW</scope>
</reference>
<reference key="5">
    <citation type="journal article" date="2006" name="Cancer Sci.">
        <title>Hepatitis B virus pre-S mutants, endoplasmic reticulum stress and hepatocarcinogenesis.</title>
        <authorList>
            <person name="Wang H.C."/>
            <person name="Huang W."/>
            <person name="Lai M.D."/>
            <person name="Su I.J."/>
        </authorList>
    </citation>
    <scope>REVIEW</scope>
</reference>
<dbReference type="EMBL" id="X51970">
    <property type="protein sequence ID" value="CAA36230.1"/>
    <property type="molecule type" value="Genomic_DNA"/>
</dbReference>
<dbReference type="PIR" id="S10383">
    <property type="entry name" value="SAVLKS"/>
</dbReference>
<dbReference type="SMR" id="P17101"/>
<dbReference type="GlyCosmos" id="P17101">
    <property type="glycosylation" value="2 sites, No reported glycans"/>
</dbReference>
<dbReference type="Proteomes" id="UP000007907">
    <property type="component" value="Segment"/>
</dbReference>
<dbReference type="GO" id="GO:0016020">
    <property type="term" value="C:membrane"/>
    <property type="evidence" value="ECO:0007669"/>
    <property type="project" value="UniProtKB-UniRule"/>
</dbReference>
<dbReference type="GO" id="GO:0019031">
    <property type="term" value="C:viral envelope"/>
    <property type="evidence" value="ECO:0007669"/>
    <property type="project" value="UniProtKB-KW"/>
</dbReference>
<dbReference type="GO" id="GO:0055036">
    <property type="term" value="C:virion membrane"/>
    <property type="evidence" value="ECO:0007669"/>
    <property type="project" value="UniProtKB-SubCell"/>
</dbReference>
<dbReference type="GO" id="GO:0075513">
    <property type="term" value="P:caveolin-mediated endocytosis of virus by host cell"/>
    <property type="evidence" value="ECO:0007669"/>
    <property type="project" value="UniProtKB-KW"/>
</dbReference>
<dbReference type="GO" id="GO:0039654">
    <property type="term" value="P:fusion of virus membrane with host endosome membrane"/>
    <property type="evidence" value="ECO:0007669"/>
    <property type="project" value="UniProtKB-KW"/>
</dbReference>
<dbReference type="GO" id="GO:0019062">
    <property type="term" value="P:virion attachment to host cell"/>
    <property type="evidence" value="ECO:0007669"/>
    <property type="project" value="UniProtKB-UniRule"/>
</dbReference>
<dbReference type="HAMAP" id="MF_04075">
    <property type="entry name" value="HBV_HBSAG"/>
    <property type="match status" value="1"/>
</dbReference>
<dbReference type="InterPro" id="IPR000349">
    <property type="entry name" value="HBV_HBSAG"/>
</dbReference>
<dbReference type="Pfam" id="PF00695">
    <property type="entry name" value="vMSA"/>
    <property type="match status" value="1"/>
</dbReference>
<accession>P17101</accession>
<evidence type="ECO:0000250" key="1">
    <source>
        <dbReference type="UniProtKB" id="P03138"/>
    </source>
</evidence>
<evidence type="ECO:0000250" key="2">
    <source>
        <dbReference type="UniProtKB" id="P03141"/>
    </source>
</evidence>
<evidence type="ECO:0000255" key="3">
    <source>
        <dbReference type="HAMAP-Rule" id="MF_04075"/>
    </source>
</evidence>
<evidence type="ECO:0000256" key="4">
    <source>
        <dbReference type="SAM" id="MobiDB-lite"/>
    </source>
</evidence>
<evidence type="ECO:0000305" key="5"/>